<proteinExistence type="evidence at protein level"/>
<accession>Q8S8F9</accession>
<accession>F4IJK3</accession>
<accession>Q8LFK8</accession>
<accession>Q9ZQ55</accession>
<sequence length="244" mass="27023">MANHETIFDQLKKQIPVDEEEPLILNRDSSVGLVIVDVVNGFCTIGSGNMAPTKHNEQISKMVEESAKLAREFCDRKWPVLAFIDSHHPDIPERPYPPHCIIGTEESELVPALKWLESEDCATLRRKDCINGFVGSMESDGSNVFVDWVKEKQIKVIVVVGICTDICVFDFVATALSARNHGVLSPVEDVVVYSRGCATFDLPLHVAKDIKGAQAHPQELMHHVGLYMAKGRGAQVVSKISFET</sequence>
<reference key="1">
    <citation type="journal article" date="1999" name="Nature">
        <title>Sequence and analysis of chromosome 2 of the plant Arabidopsis thaliana.</title>
        <authorList>
            <person name="Lin X."/>
            <person name="Kaul S."/>
            <person name="Rounsley S.D."/>
            <person name="Shea T.P."/>
            <person name="Benito M.-I."/>
            <person name="Town C.D."/>
            <person name="Fujii C.Y."/>
            <person name="Mason T.M."/>
            <person name="Bowman C.L."/>
            <person name="Barnstead M.E."/>
            <person name="Feldblyum T.V."/>
            <person name="Buell C.R."/>
            <person name="Ketchum K.A."/>
            <person name="Lee J.J."/>
            <person name="Ronning C.M."/>
            <person name="Koo H.L."/>
            <person name="Moffat K.S."/>
            <person name="Cronin L.A."/>
            <person name="Shen M."/>
            <person name="Pai G."/>
            <person name="Van Aken S."/>
            <person name="Umayam L."/>
            <person name="Tallon L.J."/>
            <person name="Gill J.E."/>
            <person name="Adams M.D."/>
            <person name="Carrera A.J."/>
            <person name="Creasy T.H."/>
            <person name="Goodman H.M."/>
            <person name="Somerville C.R."/>
            <person name="Copenhaver G.P."/>
            <person name="Preuss D."/>
            <person name="Nierman W.C."/>
            <person name="White O."/>
            <person name="Eisen J.A."/>
            <person name="Salzberg S.L."/>
            <person name="Fraser C.M."/>
            <person name="Venter J.C."/>
        </authorList>
    </citation>
    <scope>NUCLEOTIDE SEQUENCE [LARGE SCALE GENOMIC DNA]</scope>
    <source>
        <strain>cv. Columbia</strain>
    </source>
</reference>
<reference key="2">
    <citation type="journal article" date="2017" name="Plant J.">
        <title>Araport11: a complete reannotation of the Arabidopsis thaliana reference genome.</title>
        <authorList>
            <person name="Cheng C.Y."/>
            <person name="Krishnakumar V."/>
            <person name="Chan A.P."/>
            <person name="Thibaud-Nissen F."/>
            <person name="Schobel S."/>
            <person name="Town C.D."/>
        </authorList>
    </citation>
    <scope>GENOME REANNOTATION</scope>
    <source>
        <strain>cv. Columbia</strain>
    </source>
</reference>
<reference key="3">
    <citation type="journal article" date="2003" name="Science">
        <title>Empirical analysis of transcriptional activity in the Arabidopsis genome.</title>
        <authorList>
            <person name="Yamada K."/>
            <person name="Lim J."/>
            <person name="Dale J.M."/>
            <person name="Chen H."/>
            <person name="Shinn P."/>
            <person name="Palm C.J."/>
            <person name="Southwick A.M."/>
            <person name="Wu H.C."/>
            <person name="Kim C.J."/>
            <person name="Nguyen M."/>
            <person name="Pham P.K."/>
            <person name="Cheuk R.F."/>
            <person name="Karlin-Newmann G."/>
            <person name="Liu S.X."/>
            <person name="Lam B."/>
            <person name="Sakano H."/>
            <person name="Wu T."/>
            <person name="Yu G."/>
            <person name="Miranda M."/>
            <person name="Quach H.L."/>
            <person name="Tripp M."/>
            <person name="Chang C.H."/>
            <person name="Lee J.M."/>
            <person name="Toriumi M.J."/>
            <person name="Chan M.M."/>
            <person name="Tang C.C."/>
            <person name="Onodera C.S."/>
            <person name="Deng J.M."/>
            <person name="Akiyama K."/>
            <person name="Ansari Y."/>
            <person name="Arakawa T."/>
            <person name="Banh J."/>
            <person name="Banno F."/>
            <person name="Bowser L."/>
            <person name="Brooks S.Y."/>
            <person name="Carninci P."/>
            <person name="Chao Q."/>
            <person name="Choy N."/>
            <person name="Enju A."/>
            <person name="Goldsmith A.D."/>
            <person name="Gurjal M."/>
            <person name="Hansen N.F."/>
            <person name="Hayashizaki Y."/>
            <person name="Johnson-Hopson C."/>
            <person name="Hsuan V.W."/>
            <person name="Iida K."/>
            <person name="Karnes M."/>
            <person name="Khan S."/>
            <person name="Koesema E."/>
            <person name="Ishida J."/>
            <person name="Jiang P.X."/>
            <person name="Jones T."/>
            <person name="Kawai J."/>
            <person name="Kamiya A."/>
            <person name="Meyers C."/>
            <person name="Nakajima M."/>
            <person name="Narusaka M."/>
            <person name="Seki M."/>
            <person name="Sakurai T."/>
            <person name="Satou M."/>
            <person name="Tamse R."/>
            <person name="Vaysberg M."/>
            <person name="Wallender E.K."/>
            <person name="Wong C."/>
            <person name="Yamamura Y."/>
            <person name="Yuan S."/>
            <person name="Shinozaki K."/>
            <person name="Davis R.W."/>
            <person name="Theologis A."/>
            <person name="Ecker J.R."/>
        </authorList>
    </citation>
    <scope>NUCLEOTIDE SEQUENCE [LARGE SCALE MRNA] (ISOFORM 1)</scope>
    <source>
        <strain>cv. Columbia</strain>
    </source>
</reference>
<reference key="4">
    <citation type="journal article" date="2009" name="DNA Res.">
        <title>Analysis of multiple occurrences of alternative splicing events in Arabidopsis thaliana using novel sequenced full-length cDNAs.</title>
        <authorList>
            <person name="Iida K."/>
            <person name="Fukami-Kobayashi K."/>
            <person name="Toyoda A."/>
            <person name="Sakaki Y."/>
            <person name="Kobayashi M."/>
            <person name="Seki M."/>
            <person name="Shinozaki K."/>
        </authorList>
    </citation>
    <scope>NUCLEOTIDE SEQUENCE [LARGE SCALE MRNA] (ISOFORM 2)</scope>
    <source>
        <strain>cv. Columbia</strain>
    </source>
</reference>
<reference key="5">
    <citation type="submission" date="2002-03" db="EMBL/GenBank/DDBJ databases">
        <title>Full-length cDNA from Arabidopsis thaliana.</title>
        <authorList>
            <person name="Brover V.V."/>
            <person name="Troukhan M.E."/>
            <person name="Alexandrov N.A."/>
            <person name="Lu Y.-P."/>
            <person name="Flavell R.B."/>
            <person name="Feldmann K.A."/>
        </authorList>
    </citation>
    <scope>NUCLEOTIDE SEQUENCE [LARGE SCALE MRNA] (ISOFORM 1)</scope>
</reference>
<reference key="6">
    <citation type="journal article" date="2007" name="Plant J.">
        <title>Nicotinamidase participates in the salvage pathway of NAD biosynthesis in Arabidopsis.</title>
        <authorList>
            <person name="Wang G."/>
            <person name="Pichersky E."/>
        </authorList>
    </citation>
    <scope>FUNCTION</scope>
    <scope>CATALYTIC ACTIVITY</scope>
    <scope>BIOPHYSICOCHEMICAL PROPERTIES</scope>
    <scope>TISSUE SPECIFICITY</scope>
    <scope>DISRUPTION PHENOTYPE</scope>
</reference>
<evidence type="ECO:0000269" key="1">
    <source>
    </source>
</evidence>
<evidence type="ECO:0000303" key="2">
    <source>
    </source>
</evidence>
<evidence type="ECO:0000305" key="3"/>
<evidence type="ECO:0000312" key="4">
    <source>
        <dbReference type="Araport" id="AT2G22570"/>
    </source>
</evidence>
<organism>
    <name type="scientific">Arabidopsis thaliana</name>
    <name type="common">Mouse-ear cress</name>
    <dbReference type="NCBI Taxonomy" id="3702"/>
    <lineage>
        <taxon>Eukaryota</taxon>
        <taxon>Viridiplantae</taxon>
        <taxon>Streptophyta</taxon>
        <taxon>Embryophyta</taxon>
        <taxon>Tracheophyta</taxon>
        <taxon>Spermatophyta</taxon>
        <taxon>Magnoliopsida</taxon>
        <taxon>eudicotyledons</taxon>
        <taxon>Gunneridae</taxon>
        <taxon>Pentapetalae</taxon>
        <taxon>rosids</taxon>
        <taxon>malvids</taxon>
        <taxon>Brassicales</taxon>
        <taxon>Brassicaceae</taxon>
        <taxon>Camelineae</taxon>
        <taxon>Arabidopsis</taxon>
    </lineage>
</organism>
<dbReference type="EC" id="3.5.1.19" evidence="1"/>
<dbReference type="EMBL" id="AC006340">
    <property type="protein sequence ID" value="AAD15566.1"/>
    <property type="status" value="ALT_SEQ"/>
    <property type="molecule type" value="Genomic_DNA"/>
</dbReference>
<dbReference type="EMBL" id="AC006592">
    <property type="protein sequence ID" value="AAM15300.1"/>
    <property type="molecule type" value="Genomic_DNA"/>
</dbReference>
<dbReference type="EMBL" id="CP002685">
    <property type="protein sequence ID" value="AEC07323.1"/>
    <property type="molecule type" value="Genomic_DNA"/>
</dbReference>
<dbReference type="EMBL" id="CP002685">
    <property type="protein sequence ID" value="AEC07324.1"/>
    <property type="molecule type" value="Genomic_DNA"/>
</dbReference>
<dbReference type="EMBL" id="BT002359">
    <property type="protein sequence ID" value="AAN86192.1"/>
    <property type="molecule type" value="mRNA"/>
</dbReference>
<dbReference type="EMBL" id="BX821676">
    <property type="status" value="NOT_ANNOTATED_CDS"/>
    <property type="molecule type" value="mRNA"/>
</dbReference>
<dbReference type="EMBL" id="AY084790">
    <property type="protein sequence ID" value="AAM61357.1"/>
    <property type="molecule type" value="mRNA"/>
</dbReference>
<dbReference type="PIR" id="C84614">
    <property type="entry name" value="C84614"/>
</dbReference>
<dbReference type="RefSeq" id="NP_565539.1">
    <molecule id="Q8S8F9-1"/>
    <property type="nucleotide sequence ID" value="NM_127823.3"/>
</dbReference>
<dbReference type="RefSeq" id="NP_973511.1">
    <molecule id="Q8S8F9-2"/>
    <property type="nucleotide sequence ID" value="NM_201782.3"/>
</dbReference>
<dbReference type="SMR" id="Q8S8F9"/>
<dbReference type="FunCoup" id="Q8S8F9">
    <property type="interactions" value="10"/>
</dbReference>
<dbReference type="STRING" id="3702.Q8S8F9"/>
<dbReference type="PaxDb" id="3702-AT2G22570.1"/>
<dbReference type="ProteomicsDB" id="250531">
    <molecule id="Q8S8F9-1"/>
</dbReference>
<dbReference type="EnsemblPlants" id="AT2G22570.1">
    <molecule id="Q8S8F9-1"/>
    <property type="protein sequence ID" value="AT2G22570.1"/>
    <property type="gene ID" value="AT2G22570"/>
</dbReference>
<dbReference type="EnsemblPlants" id="AT2G22570.2">
    <molecule id="Q8S8F9-2"/>
    <property type="protein sequence ID" value="AT2G22570.2"/>
    <property type="gene ID" value="AT2G22570"/>
</dbReference>
<dbReference type="GeneID" id="816789"/>
<dbReference type="Gramene" id="AT2G22570.1">
    <molecule id="Q8S8F9-1"/>
    <property type="protein sequence ID" value="AT2G22570.1"/>
    <property type="gene ID" value="AT2G22570"/>
</dbReference>
<dbReference type="Gramene" id="AT2G22570.2">
    <molecule id="Q8S8F9-2"/>
    <property type="protein sequence ID" value="AT2G22570.2"/>
    <property type="gene ID" value="AT2G22570"/>
</dbReference>
<dbReference type="KEGG" id="ath:AT2G22570"/>
<dbReference type="Araport" id="AT2G22570"/>
<dbReference type="TAIR" id="AT2G22570">
    <property type="gene designation" value="NIC1"/>
</dbReference>
<dbReference type="eggNOG" id="ENOG502QR6S">
    <property type="taxonomic scope" value="Eukaryota"/>
</dbReference>
<dbReference type="HOGENOM" id="CLU_100758_0_0_1"/>
<dbReference type="InParanoid" id="Q8S8F9"/>
<dbReference type="OMA" id="FCERNWP"/>
<dbReference type="PhylomeDB" id="Q8S8F9"/>
<dbReference type="UniPathway" id="UPA00830">
    <property type="reaction ID" value="UER00790"/>
</dbReference>
<dbReference type="PRO" id="PR:Q8S8F9"/>
<dbReference type="Proteomes" id="UP000006548">
    <property type="component" value="Chromosome 2"/>
</dbReference>
<dbReference type="ExpressionAtlas" id="Q8S8F9">
    <property type="expression patterns" value="baseline and differential"/>
</dbReference>
<dbReference type="GO" id="GO:0008936">
    <property type="term" value="F:nicotinamidase activity"/>
    <property type="evidence" value="ECO:0000314"/>
    <property type="project" value="TAIR"/>
</dbReference>
<dbReference type="GO" id="GO:0019365">
    <property type="term" value="P:pyridine nucleotide salvage"/>
    <property type="evidence" value="ECO:0000315"/>
    <property type="project" value="TAIR"/>
</dbReference>
<dbReference type="GO" id="GO:0009737">
    <property type="term" value="P:response to abscisic acid"/>
    <property type="evidence" value="ECO:0000315"/>
    <property type="project" value="TAIR"/>
</dbReference>
<dbReference type="CDD" id="cd00431">
    <property type="entry name" value="cysteine_hydrolases"/>
    <property type="match status" value="1"/>
</dbReference>
<dbReference type="FunFam" id="3.40.50.850:FF:000017">
    <property type="entry name" value="Nicotinamidase 1"/>
    <property type="match status" value="1"/>
</dbReference>
<dbReference type="Gene3D" id="3.40.50.850">
    <property type="entry name" value="Isochorismatase-like"/>
    <property type="match status" value="1"/>
</dbReference>
<dbReference type="InterPro" id="IPR000868">
    <property type="entry name" value="Isochorismatase-like_dom"/>
</dbReference>
<dbReference type="InterPro" id="IPR036380">
    <property type="entry name" value="Isochorismatase-like_sf"/>
</dbReference>
<dbReference type="InterPro" id="IPR044717">
    <property type="entry name" value="NIC1"/>
</dbReference>
<dbReference type="PANTHER" id="PTHR47297">
    <property type="match status" value="1"/>
</dbReference>
<dbReference type="PANTHER" id="PTHR47297:SF3">
    <property type="entry name" value="NICOTINAMIDASE 1"/>
    <property type="match status" value="1"/>
</dbReference>
<dbReference type="Pfam" id="PF00857">
    <property type="entry name" value="Isochorismatase"/>
    <property type="match status" value="1"/>
</dbReference>
<dbReference type="SUPFAM" id="SSF52499">
    <property type="entry name" value="Isochorismatase-like hydrolases"/>
    <property type="match status" value="1"/>
</dbReference>
<feature type="chain" id="PRO_0000431487" description="Nicotinamidase 1">
    <location>
        <begin position="1"/>
        <end position="244"/>
    </location>
</feature>
<feature type="splice variant" id="VSP_057303" description="In isoform 2.">
    <original>IVVVGICTDICVFDFVATA</original>
    <variation>VSFSFDKMLSFDVEQVYCF</variation>
    <location>
        <begin position="157"/>
        <end position="175"/>
    </location>
</feature>
<feature type="splice variant" id="VSP_057304" description="In isoform 2.">
    <location>
        <begin position="176"/>
        <end position="244"/>
    </location>
</feature>
<feature type="sequence conflict" description="In Ref. 5; AAM61357." evidence="3" ref="5">
    <original>K</original>
    <variation>N</variation>
    <location>
        <position position="152"/>
    </location>
</feature>
<comment type="function">
    <text evidence="1">Catalyzes the deamidation of nicotinamide, an early step in the NAD(+) salvage pathway. Prevents the accumulation of intracellular nicotinamide, a known inhibitor of poly(ADP-ribose) polymerases (PARP enzymes).</text>
</comment>
<comment type="catalytic activity">
    <reaction evidence="1">
        <text>nicotinamide + H2O = nicotinate + NH4(+)</text>
        <dbReference type="Rhea" id="RHEA:14545"/>
        <dbReference type="ChEBI" id="CHEBI:15377"/>
        <dbReference type="ChEBI" id="CHEBI:17154"/>
        <dbReference type="ChEBI" id="CHEBI:28938"/>
        <dbReference type="ChEBI" id="CHEBI:32544"/>
        <dbReference type="EC" id="3.5.1.19"/>
    </reaction>
</comment>
<comment type="biophysicochemical properties">
    <kinetics>
        <KM evidence="1">118 uM for nicotinamide</KM>
        <text evidence="1">kcat is 0.93 sec(-1) with nicotinamide as substrate.</text>
    </kinetics>
    <phDependence>
        <text evidence="1">Optimum pH is 6.5-7.0.</text>
    </phDependence>
</comment>
<comment type="pathway">
    <text evidence="3">Cofactor biosynthesis; nicotinate biosynthesis; nicotinate from nicotinamide: step 1/1.</text>
</comment>
<comment type="alternative products">
    <event type="alternative splicing"/>
    <isoform>
        <id>Q8S8F9-1</id>
        <name>1</name>
        <sequence type="displayed"/>
    </isoform>
    <isoform>
        <id>Q8S8F9-2</id>
        <name>2</name>
        <sequence type="described" ref="VSP_057303 VSP_057304"/>
    </isoform>
</comment>
<comment type="tissue specificity">
    <text evidence="1">Expressed in roots and stems, and at lower levels in flowers, siliques and leaves.</text>
</comment>
<comment type="disruption phenotype">
    <text evidence="1">No visible phenotype under normal growth conditions, but mutant plants have decreased endogenous levels of NAD and NADP and display abnormal hypersensitivity to exogenous treatment with abscisic acid (ABA) and sodium chloride (NaCl).</text>
</comment>
<comment type="similarity">
    <text evidence="3">Belongs to the isochorismatase family.</text>
</comment>
<comment type="sequence caution" evidence="3">
    <conflict type="erroneous gene model prediction">
        <sequence resource="EMBL-CDS" id="AAD15566"/>
    </conflict>
</comment>
<gene>
    <name evidence="2" type="primary">NIC1</name>
    <name evidence="2" type="synonym">PNC1</name>
    <name evidence="4" type="ordered locus">At2g22570</name>
</gene>
<keyword id="KW-0025">Alternative splicing</keyword>
<keyword id="KW-0378">Hydrolase</keyword>
<keyword id="KW-0662">Pyridine nucleotide biosynthesis</keyword>
<keyword id="KW-1185">Reference proteome</keyword>
<protein>
    <recommendedName>
        <fullName evidence="3">Nicotinamidase 1</fullName>
        <shortName evidence="2">AtNIC1</shortName>
        <ecNumber evidence="1">3.5.1.19</ecNumber>
    </recommendedName>
    <alternativeName>
        <fullName>Nicotinamide deamidase 1</fullName>
    </alternativeName>
</protein>
<name>NIC1_ARATH</name>